<keyword id="KW-0067">ATP-binding</keyword>
<keyword id="KW-0378">Hydrolase</keyword>
<keyword id="KW-0547">Nucleotide-binding</keyword>
<protein>
    <recommendedName>
        <fullName evidence="1">5-oxoprolinase subunit A</fullName>
        <shortName evidence="1">5-OPase subunit A</shortName>
        <ecNumber evidence="1">3.5.2.9</ecNumber>
    </recommendedName>
    <alternativeName>
        <fullName evidence="1">5-oxoprolinase (ATP-hydrolyzing) subunit A</fullName>
    </alternativeName>
</protein>
<name>PXPA_PSEF5</name>
<reference key="1">
    <citation type="journal article" date="2005" name="Nat. Biotechnol.">
        <title>Complete genome sequence of the plant commensal Pseudomonas fluorescens Pf-5.</title>
        <authorList>
            <person name="Paulsen I.T."/>
            <person name="Press C.M."/>
            <person name="Ravel J."/>
            <person name="Kobayashi D.Y."/>
            <person name="Myers G.S.A."/>
            <person name="Mavrodi D.V."/>
            <person name="DeBoy R.T."/>
            <person name="Seshadri R."/>
            <person name="Ren Q."/>
            <person name="Madupu R."/>
            <person name="Dodson R.J."/>
            <person name="Durkin A.S."/>
            <person name="Brinkac L.M."/>
            <person name="Daugherty S.C."/>
            <person name="Sullivan S.A."/>
            <person name="Rosovitz M.J."/>
            <person name="Gwinn M.L."/>
            <person name="Zhou L."/>
            <person name="Schneider D.J."/>
            <person name="Cartinhour S.W."/>
            <person name="Nelson W.C."/>
            <person name="Weidman J."/>
            <person name="Watkins K."/>
            <person name="Tran K."/>
            <person name="Khouri H."/>
            <person name="Pierson E.A."/>
            <person name="Pierson L.S. III"/>
            <person name="Thomashow L.S."/>
            <person name="Loper J.E."/>
        </authorList>
    </citation>
    <scope>NUCLEOTIDE SEQUENCE [LARGE SCALE GENOMIC DNA]</scope>
    <source>
        <strain>ATCC BAA-477 / NRRL B-23932 / Pf-5</strain>
    </source>
</reference>
<dbReference type="EC" id="3.5.2.9" evidence="1"/>
<dbReference type="EMBL" id="CP000076">
    <property type="protein sequence ID" value="AAY90796.1"/>
    <property type="molecule type" value="Genomic_DNA"/>
</dbReference>
<dbReference type="RefSeq" id="WP_011059851.1">
    <property type="nucleotide sequence ID" value="NC_004129.6"/>
</dbReference>
<dbReference type="SMR" id="Q4KGJ3"/>
<dbReference type="STRING" id="220664.PFL_1513"/>
<dbReference type="KEGG" id="pfl:PFL_1513"/>
<dbReference type="PATRIC" id="fig|220664.5.peg.1547"/>
<dbReference type="eggNOG" id="COG1540">
    <property type="taxonomic scope" value="Bacteria"/>
</dbReference>
<dbReference type="HOGENOM" id="CLU_069535_0_0_6"/>
<dbReference type="Proteomes" id="UP000008540">
    <property type="component" value="Chromosome"/>
</dbReference>
<dbReference type="GO" id="GO:0017168">
    <property type="term" value="F:5-oxoprolinase (ATP-hydrolyzing) activity"/>
    <property type="evidence" value="ECO:0007669"/>
    <property type="project" value="UniProtKB-UniRule"/>
</dbReference>
<dbReference type="GO" id="GO:0005524">
    <property type="term" value="F:ATP binding"/>
    <property type="evidence" value="ECO:0007669"/>
    <property type="project" value="UniProtKB-UniRule"/>
</dbReference>
<dbReference type="GO" id="GO:0005975">
    <property type="term" value="P:carbohydrate metabolic process"/>
    <property type="evidence" value="ECO:0007669"/>
    <property type="project" value="InterPro"/>
</dbReference>
<dbReference type="CDD" id="cd10787">
    <property type="entry name" value="LamB_YcsF_like"/>
    <property type="match status" value="1"/>
</dbReference>
<dbReference type="Gene3D" id="3.20.20.370">
    <property type="entry name" value="Glycoside hydrolase/deacetylase"/>
    <property type="match status" value="1"/>
</dbReference>
<dbReference type="HAMAP" id="MF_00691">
    <property type="entry name" value="PxpA"/>
    <property type="match status" value="1"/>
</dbReference>
<dbReference type="InterPro" id="IPR011330">
    <property type="entry name" value="Glyco_hydro/deAcase_b/a-brl"/>
</dbReference>
<dbReference type="InterPro" id="IPR005501">
    <property type="entry name" value="LamB/YcsF/PxpA-like"/>
</dbReference>
<dbReference type="NCBIfam" id="NF003814">
    <property type="entry name" value="PRK05406.1-3"/>
    <property type="match status" value="1"/>
</dbReference>
<dbReference type="NCBIfam" id="NF003816">
    <property type="entry name" value="PRK05406.1-5"/>
    <property type="match status" value="1"/>
</dbReference>
<dbReference type="PANTHER" id="PTHR30292:SF0">
    <property type="entry name" value="5-OXOPROLINASE SUBUNIT A"/>
    <property type="match status" value="1"/>
</dbReference>
<dbReference type="PANTHER" id="PTHR30292">
    <property type="entry name" value="UNCHARACTERIZED PROTEIN YBGL-RELATED"/>
    <property type="match status" value="1"/>
</dbReference>
<dbReference type="Pfam" id="PF03746">
    <property type="entry name" value="LamB_YcsF"/>
    <property type="match status" value="1"/>
</dbReference>
<dbReference type="SUPFAM" id="SSF88713">
    <property type="entry name" value="Glycoside hydrolase/deacetylase"/>
    <property type="match status" value="1"/>
</dbReference>
<proteinExistence type="inferred from homology"/>
<accession>Q4KGJ3</accession>
<gene>
    <name evidence="1" type="primary">pxpA</name>
    <name type="ordered locus">PFL_1513</name>
</gene>
<organism>
    <name type="scientific">Pseudomonas fluorescens (strain ATCC BAA-477 / NRRL B-23932 / Pf-5)</name>
    <dbReference type="NCBI Taxonomy" id="220664"/>
    <lineage>
        <taxon>Bacteria</taxon>
        <taxon>Pseudomonadati</taxon>
        <taxon>Pseudomonadota</taxon>
        <taxon>Gammaproteobacteria</taxon>
        <taxon>Pseudomonadales</taxon>
        <taxon>Pseudomonadaceae</taxon>
        <taxon>Pseudomonas</taxon>
    </lineage>
</organism>
<sequence length="250" mass="26756">MSRLLLNCDIGESFGNWTLGLDAEVMPFIDCANIACGFHAGDPGIMRKTVALALANGVRIGAHPAYQDLAGFGRRSMSYSPEEIQDLLHYQVGALDGICRAQGGRVEYVKPHGAMYNDMMAKPAQLRAVIQAVAAYDPQLPLMLMATRDNSAAQALGDEYGVTLWFEAFADRAYDNAGHLVSRQLPGAVHHDAQTILQQALTIARGEPLAASDGSALLLHANTLCVHGDNASSVAAVQRIREALNQQSGL</sequence>
<evidence type="ECO:0000255" key="1">
    <source>
        <dbReference type="HAMAP-Rule" id="MF_00691"/>
    </source>
</evidence>
<feature type="chain" id="PRO_0000185028" description="5-oxoprolinase subunit A">
    <location>
        <begin position="1"/>
        <end position="250"/>
    </location>
</feature>
<comment type="function">
    <text evidence="1">Catalyzes the cleavage of 5-oxoproline to form L-glutamate coupled to the hydrolysis of ATP to ADP and inorganic phosphate.</text>
</comment>
<comment type="catalytic activity">
    <reaction evidence="1">
        <text>5-oxo-L-proline + ATP + 2 H2O = L-glutamate + ADP + phosphate + H(+)</text>
        <dbReference type="Rhea" id="RHEA:10348"/>
        <dbReference type="ChEBI" id="CHEBI:15377"/>
        <dbReference type="ChEBI" id="CHEBI:15378"/>
        <dbReference type="ChEBI" id="CHEBI:29985"/>
        <dbReference type="ChEBI" id="CHEBI:30616"/>
        <dbReference type="ChEBI" id="CHEBI:43474"/>
        <dbReference type="ChEBI" id="CHEBI:58402"/>
        <dbReference type="ChEBI" id="CHEBI:456216"/>
        <dbReference type="EC" id="3.5.2.9"/>
    </reaction>
</comment>
<comment type="subunit">
    <text evidence="1">Forms a complex composed of PxpA, PxpB and PxpC.</text>
</comment>
<comment type="similarity">
    <text evidence="1">Belongs to the LamB/PxpA family.</text>
</comment>